<organism>
    <name type="scientific">Xanthomonas oryzae pv. oryzae (strain KACC10331 / KXO85)</name>
    <dbReference type="NCBI Taxonomy" id="291331"/>
    <lineage>
        <taxon>Bacteria</taxon>
        <taxon>Pseudomonadati</taxon>
        <taxon>Pseudomonadota</taxon>
        <taxon>Gammaproteobacteria</taxon>
        <taxon>Lysobacterales</taxon>
        <taxon>Lysobacteraceae</taxon>
        <taxon>Xanthomonas</taxon>
    </lineage>
</organism>
<keyword id="KW-0028">Amino-acid biosynthesis</keyword>
<keyword id="KW-0963">Cytoplasm</keyword>
<keyword id="KW-0368">Histidine biosynthesis</keyword>
<keyword id="KW-0378">Hydrolase</keyword>
<keyword id="KW-0456">Lyase</keyword>
<keyword id="KW-0460">Magnesium</keyword>
<keyword id="KW-0479">Metal-binding</keyword>
<keyword id="KW-0511">Multifunctional enzyme</keyword>
<keyword id="KW-1185">Reference proteome</keyword>
<dbReference type="EC" id="3.1.3.15" evidence="1"/>
<dbReference type="EC" id="4.2.1.19" evidence="1"/>
<dbReference type="EMBL" id="AE013598">
    <property type="protein sequence ID" value="AAW75512.1"/>
    <property type="molecule type" value="Genomic_DNA"/>
</dbReference>
<dbReference type="SMR" id="Q5H0K9"/>
<dbReference type="STRING" id="291331.XOO2258"/>
<dbReference type="KEGG" id="xoo:XOO2258"/>
<dbReference type="HOGENOM" id="CLU_044308_0_0_6"/>
<dbReference type="UniPathway" id="UPA00031">
    <property type="reaction ID" value="UER00011"/>
</dbReference>
<dbReference type="UniPathway" id="UPA00031">
    <property type="reaction ID" value="UER00013"/>
</dbReference>
<dbReference type="Proteomes" id="UP000006735">
    <property type="component" value="Chromosome"/>
</dbReference>
<dbReference type="GO" id="GO:0005737">
    <property type="term" value="C:cytoplasm"/>
    <property type="evidence" value="ECO:0007669"/>
    <property type="project" value="UniProtKB-SubCell"/>
</dbReference>
<dbReference type="GO" id="GO:0004401">
    <property type="term" value="F:histidinol-phosphatase activity"/>
    <property type="evidence" value="ECO:0007669"/>
    <property type="project" value="UniProtKB-UniRule"/>
</dbReference>
<dbReference type="GO" id="GO:0004424">
    <property type="term" value="F:imidazoleglycerol-phosphate dehydratase activity"/>
    <property type="evidence" value="ECO:0007669"/>
    <property type="project" value="UniProtKB-UniRule"/>
</dbReference>
<dbReference type="GO" id="GO:0046872">
    <property type="term" value="F:metal ion binding"/>
    <property type="evidence" value="ECO:0007669"/>
    <property type="project" value="UniProtKB-KW"/>
</dbReference>
<dbReference type="GO" id="GO:0000105">
    <property type="term" value="P:L-histidine biosynthetic process"/>
    <property type="evidence" value="ECO:0007669"/>
    <property type="project" value="UniProtKB-UniRule"/>
</dbReference>
<dbReference type="CDD" id="cd07914">
    <property type="entry name" value="IGPD"/>
    <property type="match status" value="1"/>
</dbReference>
<dbReference type="FunFam" id="3.40.50.1000:FF:000061">
    <property type="entry name" value="Histidine biosynthesis bifunctional protein HisB"/>
    <property type="match status" value="1"/>
</dbReference>
<dbReference type="FunFam" id="3.30.230.40:FF:000001">
    <property type="entry name" value="Imidazoleglycerol-phosphate dehydratase HisB"/>
    <property type="match status" value="1"/>
</dbReference>
<dbReference type="FunFam" id="3.30.230.40:FF:000003">
    <property type="entry name" value="Imidazoleglycerol-phosphate dehydratase HisB"/>
    <property type="match status" value="1"/>
</dbReference>
<dbReference type="Gene3D" id="3.40.50.1000">
    <property type="entry name" value="HAD superfamily/HAD-like"/>
    <property type="match status" value="1"/>
</dbReference>
<dbReference type="Gene3D" id="3.30.230.40">
    <property type="entry name" value="Imidazole glycerol phosphate dehydratase, domain 1"/>
    <property type="match status" value="2"/>
</dbReference>
<dbReference type="HAMAP" id="MF_01022">
    <property type="entry name" value="Bifunc_HisB"/>
    <property type="match status" value="1"/>
</dbReference>
<dbReference type="HAMAP" id="MF_00076">
    <property type="entry name" value="HisB"/>
    <property type="match status" value="1"/>
</dbReference>
<dbReference type="InterPro" id="IPR036412">
    <property type="entry name" value="HAD-like_sf"/>
</dbReference>
<dbReference type="InterPro" id="IPR006549">
    <property type="entry name" value="HAD-SF_hydro_IIIA"/>
</dbReference>
<dbReference type="InterPro" id="IPR023214">
    <property type="entry name" value="HAD_sf"/>
</dbReference>
<dbReference type="InterPro" id="IPR020566">
    <property type="entry name" value="His_synth_bifunc_HisB"/>
</dbReference>
<dbReference type="InterPro" id="IPR005954">
    <property type="entry name" value="HisB_N"/>
</dbReference>
<dbReference type="InterPro" id="IPR006543">
    <property type="entry name" value="Histidinol-phos"/>
</dbReference>
<dbReference type="InterPro" id="IPR038494">
    <property type="entry name" value="IGPD_sf"/>
</dbReference>
<dbReference type="InterPro" id="IPR000807">
    <property type="entry name" value="ImidazoleglycerolP_deHydtase"/>
</dbReference>
<dbReference type="InterPro" id="IPR020565">
    <property type="entry name" value="ImidazoleglycerP_deHydtase_CS"/>
</dbReference>
<dbReference type="InterPro" id="IPR020568">
    <property type="entry name" value="Ribosomal_Su5_D2-typ_SF"/>
</dbReference>
<dbReference type="NCBIfam" id="TIGR01662">
    <property type="entry name" value="HAD-SF-IIIA"/>
    <property type="match status" value="1"/>
</dbReference>
<dbReference type="NCBIfam" id="TIGR01261">
    <property type="entry name" value="hisB_Nterm"/>
    <property type="match status" value="1"/>
</dbReference>
<dbReference type="NCBIfam" id="TIGR01656">
    <property type="entry name" value="Histidinol-ppas"/>
    <property type="match status" value="1"/>
</dbReference>
<dbReference type="NCBIfam" id="NF003937">
    <property type="entry name" value="PRK05446.1"/>
    <property type="match status" value="1"/>
</dbReference>
<dbReference type="PANTHER" id="PTHR23133:SF2">
    <property type="entry name" value="IMIDAZOLEGLYCEROL-PHOSPHATE DEHYDRATASE"/>
    <property type="match status" value="1"/>
</dbReference>
<dbReference type="PANTHER" id="PTHR23133">
    <property type="entry name" value="IMIDAZOLEGLYCEROL-PHOSPHATE DEHYDRATASE HIS7"/>
    <property type="match status" value="1"/>
</dbReference>
<dbReference type="Pfam" id="PF13242">
    <property type="entry name" value="Hydrolase_like"/>
    <property type="match status" value="1"/>
</dbReference>
<dbReference type="Pfam" id="PF00475">
    <property type="entry name" value="IGPD"/>
    <property type="match status" value="1"/>
</dbReference>
<dbReference type="SUPFAM" id="SSF56784">
    <property type="entry name" value="HAD-like"/>
    <property type="match status" value="1"/>
</dbReference>
<dbReference type="SUPFAM" id="SSF54211">
    <property type="entry name" value="Ribosomal protein S5 domain 2-like"/>
    <property type="match status" value="2"/>
</dbReference>
<dbReference type="PROSITE" id="PS00954">
    <property type="entry name" value="IGP_DEHYDRATASE_1"/>
    <property type="match status" value="1"/>
</dbReference>
<dbReference type="PROSITE" id="PS00955">
    <property type="entry name" value="IGP_DEHYDRATASE_2"/>
    <property type="match status" value="1"/>
</dbReference>
<gene>
    <name evidence="1" type="primary">hisB</name>
    <name type="ordered locus">XOO2258</name>
</gene>
<comment type="catalytic activity">
    <reaction evidence="1">
        <text>D-erythro-1-(imidazol-4-yl)glycerol 3-phosphate = 3-(imidazol-4-yl)-2-oxopropyl phosphate + H2O</text>
        <dbReference type="Rhea" id="RHEA:11040"/>
        <dbReference type="ChEBI" id="CHEBI:15377"/>
        <dbReference type="ChEBI" id="CHEBI:57766"/>
        <dbReference type="ChEBI" id="CHEBI:58278"/>
        <dbReference type="EC" id="4.2.1.19"/>
    </reaction>
</comment>
<comment type="catalytic activity">
    <reaction evidence="1">
        <text>L-histidinol phosphate + H2O = L-histidinol + phosphate</text>
        <dbReference type="Rhea" id="RHEA:14465"/>
        <dbReference type="ChEBI" id="CHEBI:15377"/>
        <dbReference type="ChEBI" id="CHEBI:43474"/>
        <dbReference type="ChEBI" id="CHEBI:57699"/>
        <dbReference type="ChEBI" id="CHEBI:57980"/>
        <dbReference type="EC" id="3.1.3.15"/>
    </reaction>
</comment>
<comment type="cofactor">
    <cofactor evidence="1">
        <name>Mg(2+)</name>
        <dbReference type="ChEBI" id="CHEBI:18420"/>
    </cofactor>
</comment>
<comment type="pathway">
    <text evidence="1">Amino-acid biosynthesis; L-histidine biosynthesis; L-histidine from 5-phospho-alpha-D-ribose 1-diphosphate: step 6/9.</text>
</comment>
<comment type="pathway">
    <text evidence="1">Amino-acid biosynthesis; L-histidine biosynthesis; L-histidine from 5-phospho-alpha-D-ribose 1-diphosphate: step 8/9.</text>
</comment>
<comment type="subcellular location">
    <subcellularLocation>
        <location evidence="1">Cytoplasm</location>
    </subcellularLocation>
</comment>
<comment type="similarity">
    <text evidence="1">In the N-terminal section; belongs to the histidinol-phosphatase family.</text>
</comment>
<comment type="similarity">
    <text evidence="1">In the C-terminal section; belongs to the imidazoleglycerol-phosphate dehydratase family.</text>
</comment>
<accession>Q5H0K9</accession>
<sequence>MTPILFVDRDGTLITEPADYQIDAYEKLRFVDHVIPAMLKLRDAGYQFVIVSNQDGLGSESFPRASFDGPNNLMLQIFASQGIEFREVLIDCSWPSDNAPTRKPGVGLMVPYLQDRTIDWARSAMVGDRITDIQFAQNLNIRGFQLRTDEFGGEWDWPGIAHELADAPRRAVVQRNTKETRIRVELDLDRVAEPKTATGLPFFDHMLEQIGKHGGFALDIRAEGDLHIDEHHTIEDTGLALGQALREALGDKRGIGRYGFDPESSPWQVAGDTAQHGFTLPMDETIASAALDFSGRPYFVFDGQFKRDRLGDMPTELVPHFFRSICDASGVNLHLTVRGENDHHKVEACFKALARALRQAIRREGSALPTTKGAL</sequence>
<evidence type="ECO:0000255" key="1">
    <source>
        <dbReference type="HAMAP-Rule" id="MF_01022"/>
    </source>
</evidence>
<proteinExistence type="inferred from homology"/>
<feature type="chain" id="PRO_1000063453" description="Histidine biosynthesis bifunctional protein HisB">
    <location>
        <begin position="1"/>
        <end position="375"/>
    </location>
</feature>
<feature type="region of interest" description="Histidinol-phosphatase" evidence="1">
    <location>
        <begin position="1"/>
        <end position="168"/>
    </location>
</feature>
<feature type="region of interest" description="Imidazoleglycerol-phosphate dehydratase" evidence="1">
    <location>
        <begin position="169"/>
        <end position="375"/>
    </location>
</feature>
<feature type="active site" description="Nucleophile" evidence="1">
    <location>
        <position position="8"/>
    </location>
</feature>
<feature type="active site" description="Proton donor" evidence="1">
    <location>
        <position position="10"/>
    </location>
</feature>
<feature type="binding site" evidence="1">
    <location>
        <position position="8"/>
    </location>
    <ligand>
        <name>Mg(2+)</name>
        <dbReference type="ChEBI" id="CHEBI:18420"/>
    </ligand>
</feature>
<feature type="binding site" evidence="1">
    <location>
        <position position="10"/>
    </location>
    <ligand>
        <name>Mg(2+)</name>
        <dbReference type="ChEBI" id="CHEBI:18420"/>
    </ligand>
</feature>
<feature type="binding site" evidence="1">
    <location>
        <position position="128"/>
    </location>
    <ligand>
        <name>Mg(2+)</name>
        <dbReference type="ChEBI" id="CHEBI:18420"/>
    </ligand>
</feature>
<name>HIS7_XANOR</name>
<protein>
    <recommendedName>
        <fullName evidence="1">Histidine biosynthesis bifunctional protein HisB</fullName>
    </recommendedName>
    <domain>
        <recommendedName>
            <fullName evidence="1">Histidinol-phosphatase</fullName>
            <ecNumber evidence="1">3.1.3.15</ecNumber>
        </recommendedName>
    </domain>
    <domain>
        <recommendedName>
            <fullName evidence="1">Imidazoleglycerol-phosphate dehydratase</fullName>
            <shortName evidence="1">IGPD</shortName>
            <ecNumber evidence="1">4.2.1.19</ecNumber>
        </recommendedName>
    </domain>
</protein>
<reference key="1">
    <citation type="journal article" date="2005" name="Nucleic Acids Res.">
        <title>The genome sequence of Xanthomonas oryzae pathovar oryzae KACC10331, the bacterial blight pathogen of rice.</title>
        <authorList>
            <person name="Lee B.-M."/>
            <person name="Park Y.-J."/>
            <person name="Park D.-S."/>
            <person name="Kang H.-W."/>
            <person name="Kim J.-G."/>
            <person name="Song E.-S."/>
            <person name="Park I.-C."/>
            <person name="Yoon U.-H."/>
            <person name="Hahn J.-H."/>
            <person name="Koo B.-S."/>
            <person name="Lee G.-B."/>
            <person name="Kim H."/>
            <person name="Park H.-S."/>
            <person name="Yoon K.-O."/>
            <person name="Kim J.-H."/>
            <person name="Jung C.-H."/>
            <person name="Koh N.-H."/>
            <person name="Seo J.-S."/>
            <person name="Go S.-J."/>
        </authorList>
    </citation>
    <scope>NUCLEOTIDE SEQUENCE [LARGE SCALE GENOMIC DNA]</scope>
    <source>
        <strain>KACC10331 / KXO85</strain>
    </source>
</reference>